<gene>
    <name evidence="1" type="primary">dut</name>
    <name type="ordered locus">BURPS668_0964</name>
</gene>
<protein>
    <recommendedName>
        <fullName evidence="1">Deoxyuridine 5'-triphosphate nucleotidohydrolase</fullName>
        <shortName evidence="1">dUTPase</shortName>
        <ecNumber evidence="1">3.6.1.23</ecNumber>
    </recommendedName>
    <alternativeName>
        <fullName evidence="1">dUTP pyrophosphatase</fullName>
    </alternativeName>
</protein>
<sequence length="148" mass="15802">MKLDLKILDARMRDYLPKYATTGSAGLDLRACLDAPVTLKPGDTALVPTGLAIHLADPGYAALILPRSGLGHKHGIVLGNLVGLIDSDYQGELMISTWNRGQTEFALNPFERLAQLVIVPVVQARFNLVDDFAQSERGAGGFGSTGRG</sequence>
<keyword id="KW-0378">Hydrolase</keyword>
<keyword id="KW-0460">Magnesium</keyword>
<keyword id="KW-0479">Metal-binding</keyword>
<keyword id="KW-0546">Nucleotide metabolism</keyword>
<organism>
    <name type="scientific">Burkholderia pseudomallei (strain 668)</name>
    <dbReference type="NCBI Taxonomy" id="320373"/>
    <lineage>
        <taxon>Bacteria</taxon>
        <taxon>Pseudomonadati</taxon>
        <taxon>Pseudomonadota</taxon>
        <taxon>Betaproteobacteria</taxon>
        <taxon>Burkholderiales</taxon>
        <taxon>Burkholderiaceae</taxon>
        <taxon>Burkholderia</taxon>
        <taxon>pseudomallei group</taxon>
    </lineage>
</organism>
<evidence type="ECO:0000255" key="1">
    <source>
        <dbReference type="HAMAP-Rule" id="MF_00116"/>
    </source>
</evidence>
<dbReference type="EC" id="3.6.1.23" evidence="1"/>
<dbReference type="EMBL" id="CP000570">
    <property type="protein sequence ID" value="ABN82438.1"/>
    <property type="molecule type" value="Genomic_DNA"/>
</dbReference>
<dbReference type="RefSeq" id="WP_004186718.1">
    <property type="nucleotide sequence ID" value="NC_009074.1"/>
</dbReference>
<dbReference type="SMR" id="A3N6P4"/>
<dbReference type="GeneID" id="93059416"/>
<dbReference type="KEGG" id="bpd:BURPS668_0964"/>
<dbReference type="HOGENOM" id="CLU_068508_1_1_4"/>
<dbReference type="UniPathway" id="UPA00610">
    <property type="reaction ID" value="UER00666"/>
</dbReference>
<dbReference type="GO" id="GO:0004170">
    <property type="term" value="F:dUTP diphosphatase activity"/>
    <property type="evidence" value="ECO:0007669"/>
    <property type="project" value="UniProtKB-UniRule"/>
</dbReference>
<dbReference type="GO" id="GO:0000287">
    <property type="term" value="F:magnesium ion binding"/>
    <property type="evidence" value="ECO:0007669"/>
    <property type="project" value="UniProtKB-UniRule"/>
</dbReference>
<dbReference type="GO" id="GO:0006226">
    <property type="term" value="P:dUMP biosynthetic process"/>
    <property type="evidence" value="ECO:0007669"/>
    <property type="project" value="UniProtKB-UniRule"/>
</dbReference>
<dbReference type="GO" id="GO:0046081">
    <property type="term" value="P:dUTP catabolic process"/>
    <property type="evidence" value="ECO:0007669"/>
    <property type="project" value="InterPro"/>
</dbReference>
<dbReference type="CDD" id="cd07557">
    <property type="entry name" value="trimeric_dUTPase"/>
    <property type="match status" value="1"/>
</dbReference>
<dbReference type="FunFam" id="2.70.40.10:FF:000002">
    <property type="entry name" value="dUTP diphosphatase"/>
    <property type="match status" value="1"/>
</dbReference>
<dbReference type="Gene3D" id="2.70.40.10">
    <property type="match status" value="1"/>
</dbReference>
<dbReference type="HAMAP" id="MF_00116">
    <property type="entry name" value="dUTPase_bact"/>
    <property type="match status" value="1"/>
</dbReference>
<dbReference type="InterPro" id="IPR008181">
    <property type="entry name" value="dUTPase"/>
</dbReference>
<dbReference type="InterPro" id="IPR029054">
    <property type="entry name" value="dUTPase-like"/>
</dbReference>
<dbReference type="InterPro" id="IPR036157">
    <property type="entry name" value="dUTPase-like_sf"/>
</dbReference>
<dbReference type="InterPro" id="IPR033704">
    <property type="entry name" value="dUTPase_trimeric"/>
</dbReference>
<dbReference type="NCBIfam" id="TIGR00576">
    <property type="entry name" value="dut"/>
    <property type="match status" value="1"/>
</dbReference>
<dbReference type="NCBIfam" id="NF001862">
    <property type="entry name" value="PRK00601.1"/>
    <property type="match status" value="1"/>
</dbReference>
<dbReference type="PANTHER" id="PTHR11241">
    <property type="entry name" value="DEOXYURIDINE 5'-TRIPHOSPHATE NUCLEOTIDOHYDROLASE"/>
    <property type="match status" value="1"/>
</dbReference>
<dbReference type="PANTHER" id="PTHR11241:SF0">
    <property type="entry name" value="DEOXYURIDINE 5'-TRIPHOSPHATE NUCLEOTIDOHYDROLASE"/>
    <property type="match status" value="1"/>
</dbReference>
<dbReference type="Pfam" id="PF00692">
    <property type="entry name" value="dUTPase"/>
    <property type="match status" value="1"/>
</dbReference>
<dbReference type="SUPFAM" id="SSF51283">
    <property type="entry name" value="dUTPase-like"/>
    <property type="match status" value="1"/>
</dbReference>
<reference key="1">
    <citation type="journal article" date="2010" name="Genome Biol. Evol.">
        <title>Continuing evolution of Burkholderia mallei through genome reduction and large-scale rearrangements.</title>
        <authorList>
            <person name="Losada L."/>
            <person name="Ronning C.M."/>
            <person name="DeShazer D."/>
            <person name="Woods D."/>
            <person name="Fedorova N."/>
            <person name="Kim H.S."/>
            <person name="Shabalina S.A."/>
            <person name="Pearson T.R."/>
            <person name="Brinkac L."/>
            <person name="Tan P."/>
            <person name="Nandi T."/>
            <person name="Crabtree J."/>
            <person name="Badger J."/>
            <person name="Beckstrom-Sternberg S."/>
            <person name="Saqib M."/>
            <person name="Schutzer S.E."/>
            <person name="Keim P."/>
            <person name="Nierman W.C."/>
        </authorList>
    </citation>
    <scope>NUCLEOTIDE SEQUENCE [LARGE SCALE GENOMIC DNA]</scope>
    <source>
        <strain>668</strain>
    </source>
</reference>
<comment type="function">
    <text evidence="1">This enzyme is involved in nucleotide metabolism: it produces dUMP, the immediate precursor of thymidine nucleotides and it decreases the intracellular concentration of dUTP so that uracil cannot be incorporated into DNA.</text>
</comment>
<comment type="catalytic activity">
    <reaction evidence="1">
        <text>dUTP + H2O = dUMP + diphosphate + H(+)</text>
        <dbReference type="Rhea" id="RHEA:10248"/>
        <dbReference type="ChEBI" id="CHEBI:15377"/>
        <dbReference type="ChEBI" id="CHEBI:15378"/>
        <dbReference type="ChEBI" id="CHEBI:33019"/>
        <dbReference type="ChEBI" id="CHEBI:61555"/>
        <dbReference type="ChEBI" id="CHEBI:246422"/>
        <dbReference type="EC" id="3.6.1.23"/>
    </reaction>
</comment>
<comment type="cofactor">
    <cofactor evidence="1">
        <name>Mg(2+)</name>
        <dbReference type="ChEBI" id="CHEBI:18420"/>
    </cofactor>
</comment>
<comment type="pathway">
    <text evidence="1">Pyrimidine metabolism; dUMP biosynthesis; dUMP from dCTP (dUTP route): step 2/2.</text>
</comment>
<comment type="similarity">
    <text evidence="1">Belongs to the dUTPase family.</text>
</comment>
<accession>A3N6P4</accession>
<name>DUT_BURP6</name>
<proteinExistence type="inferred from homology"/>
<feature type="chain" id="PRO_1000015456" description="Deoxyuridine 5'-triphosphate nucleotidohydrolase">
    <location>
        <begin position="1"/>
        <end position="148"/>
    </location>
</feature>
<feature type="binding site" evidence="1">
    <location>
        <begin position="67"/>
        <end position="69"/>
    </location>
    <ligand>
        <name>substrate</name>
    </ligand>
</feature>
<feature type="binding site" evidence="1">
    <location>
        <position position="80"/>
    </location>
    <ligand>
        <name>substrate</name>
    </ligand>
</feature>
<feature type="binding site" evidence="1">
    <location>
        <begin position="84"/>
        <end position="86"/>
    </location>
    <ligand>
        <name>substrate</name>
    </ligand>
</feature>
<feature type="binding site" evidence="1">
    <location>
        <position position="94"/>
    </location>
    <ligand>
        <name>substrate</name>
    </ligand>
</feature>